<keyword id="KW-0235">DNA replication</keyword>
<keyword id="KW-0238">DNA-binding</keyword>
<keyword id="KW-0614">Plasmid</keyword>
<feature type="chain" id="PRO_0000068338" description="Replication initiation protein">
    <location>
        <begin position="1"/>
        <end position="343"/>
    </location>
</feature>
<feature type="region of interest" description="Disordered" evidence="1">
    <location>
        <begin position="42"/>
        <end position="61"/>
    </location>
</feature>
<organism>
    <name type="scientific">Escherichia coli</name>
    <dbReference type="NCBI Taxonomy" id="562"/>
    <lineage>
        <taxon>Bacteria</taxon>
        <taxon>Pseudomonadati</taxon>
        <taxon>Pseudomonadota</taxon>
        <taxon>Gammaproteobacteria</taxon>
        <taxon>Enterobacterales</taxon>
        <taxon>Enterobacteriaceae</taxon>
        <taxon>Escherichia</taxon>
    </lineage>
</organism>
<geneLocation type="plasmid">
    <name>IncB pMu707</name>
</geneLocation>
<protein>
    <recommendedName>
        <fullName>Replication initiation protein</fullName>
    </recommendedName>
    <alternativeName>
        <fullName>Replication-associated protein</fullName>
    </alternativeName>
</protein>
<comment type="function">
    <text>Binds specifically to the motif 5'-AANCYGCAA-3' (repA box) in the origin of replication. Acts preferentially in cis; binding to the repA boxes is sequential, with the boxes closest to the DnaA binding site being occupied first. It is involved in promoting open complex formation by unwinding the oriB at sequence 5'-TCTTAA-3'.</text>
</comment>
<name>REP7_ECOLX</name>
<sequence>MAGLKNTSYNAVHWSQLAPEEQIRFWEDYEAGRATTFLVEPERKRTKRRRGEHSTKPKCENPSWYRPERYKALKGQLGHAYNRLVKKDPVTGEQSLRMRMSRHPFYVQKRTFVGRKYAFRPEKQRLLDAIWPVLVSFSDAGTHTVGMSVTRLAEEISPKDSEGHVIPELEVTVSRLSRLLAEQVRFGVLGVSEETMWDREHRQRLPRYVWITPAGWQMLGVDMVKLHEQQQKRLRESEIRQQLIREGVLREDEDISVHAARKRWYLQRSQDALKKRREKAAASKRANRLKKLPVDQQIYEMAEYLRKRLPPDEAYFCSDDHLKRLAIRELRQLELTLAAPPPH</sequence>
<accession>Q52221</accession>
<proteinExistence type="evidence at protein level"/>
<reference key="1">
    <citation type="journal article" date="1991" name="J. Bacteriol.">
        <title>Comparative analysis of the replication regions of IncB, IncK, and IncZ plasmids.</title>
        <authorList>
            <person name="Praszkier J."/>
            <person name="Wei T."/>
            <person name="Siemering K."/>
            <person name="Pittard J."/>
        </authorList>
    </citation>
    <scope>NUCLEOTIDE SEQUENCE [GENOMIC DNA]</scope>
</reference>
<reference key="2">
    <citation type="journal article" date="2003" name="J. Bacteriol.">
        <title>Interaction of the initiator protein of an IncB plasmid with its origin of DNA replication.</title>
        <authorList>
            <person name="Betteridge T."/>
            <person name="Yang J."/>
            <person name="Pittard A.J."/>
            <person name="Praszkier J."/>
        </authorList>
    </citation>
    <scope>CHARACTERIZATION</scope>
</reference>
<gene>
    <name type="primary">repA</name>
</gene>
<evidence type="ECO:0000256" key="1">
    <source>
        <dbReference type="SAM" id="MobiDB-lite"/>
    </source>
</evidence>
<dbReference type="EMBL" id="M93062">
    <property type="protein sequence ID" value="AAA98176.1"/>
    <property type="molecule type" value="Genomic_DNA"/>
</dbReference>
<dbReference type="PIR" id="B42382">
    <property type="entry name" value="B42382"/>
</dbReference>
<dbReference type="RefSeq" id="WP_000907880.1">
    <property type="nucleotide sequence ID" value="NZ_WVUC01000024.1"/>
</dbReference>
<dbReference type="RefSeq" id="YP_002756659.1">
    <property type="nucleotide sequence ID" value="NC_012487.1"/>
</dbReference>
<dbReference type="GO" id="GO:0003677">
    <property type="term" value="F:DNA binding"/>
    <property type="evidence" value="ECO:0007669"/>
    <property type="project" value="UniProtKB-KW"/>
</dbReference>
<dbReference type="GO" id="GO:0006260">
    <property type="term" value="P:DNA replication"/>
    <property type="evidence" value="ECO:0007669"/>
    <property type="project" value="UniProtKB-KW"/>
</dbReference>
<dbReference type="GO" id="GO:0006276">
    <property type="term" value="P:plasmid maintenance"/>
    <property type="evidence" value="ECO:0007669"/>
    <property type="project" value="InterPro"/>
</dbReference>
<dbReference type="InterPro" id="IPR003446">
    <property type="entry name" value="Plasmid_replication_init_RepA"/>
</dbReference>
<dbReference type="NCBIfam" id="NF040977">
    <property type="entry name" value="RepA_IncFII_LM"/>
    <property type="match status" value="1"/>
</dbReference>